<protein>
    <recommendedName>
        <fullName>Unknown protein 2</fullName>
    </recommendedName>
</protein>
<proteinExistence type="evidence at protein level"/>
<feature type="chain" id="PRO_0000318126" description="Unknown protein 2">
    <location>
        <begin position="1" status="less than"/>
        <end position="11" status="greater than"/>
    </location>
</feature>
<feature type="unsure residue" description="L or I">
    <location>
        <position position="1"/>
    </location>
</feature>
<feature type="unsure residue" description="F or M">
    <location>
        <position position="2"/>
    </location>
</feature>
<feature type="unsure residue" description="L or I">
    <location>
        <position position="4"/>
    </location>
</feature>
<feature type="unsure residue" description="L or I">
    <location>
        <position position="9"/>
    </location>
</feature>
<feature type="unsure residue" description="K or Q">
    <location>
        <position position="10"/>
    </location>
</feature>
<feature type="non-terminal residue">
    <location>
        <position position="1"/>
    </location>
</feature>
<feature type="non-terminal residue">
    <location>
        <position position="11"/>
    </location>
</feature>
<accession>P85426</accession>
<reference key="1">
    <citation type="journal article" date="2009" name="Physiol. Plantarum">
        <title>The presence of sinapyl lignin in Ginkgo biloba cell cultures changes our views of the evolution of lignin biosynthesis.</title>
        <authorList>
            <person name="Novo Uzal E."/>
            <person name="Gomez Ros L.V."/>
            <person name="Pomar F."/>
            <person name="Bernal M.A."/>
            <person name="Paradela A."/>
            <person name="Albar J.P."/>
            <person name="Ros Barcelo A."/>
        </authorList>
    </citation>
    <scope>PROTEIN SEQUENCE</scope>
    <source>
        <strain>PC-650</strain>
        <tissue>Callus</tissue>
    </source>
</reference>
<name>UP02_GINBI</name>
<organism>
    <name type="scientific">Ginkgo biloba</name>
    <name type="common">Ginkgo</name>
    <name type="synonym">Maidenhair tree</name>
    <dbReference type="NCBI Taxonomy" id="3311"/>
    <lineage>
        <taxon>Eukaryota</taxon>
        <taxon>Viridiplantae</taxon>
        <taxon>Streptophyta</taxon>
        <taxon>Embryophyta</taxon>
        <taxon>Tracheophyta</taxon>
        <taxon>Spermatophyta</taxon>
        <taxon>Ginkgoidae</taxon>
        <taxon>Ginkgoales</taxon>
        <taxon>Ginkgoaceae</taxon>
        <taxon>Ginkgo</taxon>
    </lineage>
</organism>
<sequence>LFSLCXXXLKR</sequence>
<keyword id="KW-0903">Direct protein sequencing</keyword>